<dbReference type="EMBL" id="D00332">
    <property type="protein sequence ID" value="BAA00239.1"/>
    <property type="molecule type" value="Genomic_DNA"/>
</dbReference>
<dbReference type="EMBL" id="AE006468">
    <property type="protein sequence ID" value="AAL19353.1"/>
    <property type="molecule type" value="Genomic_DNA"/>
</dbReference>
<dbReference type="PIR" id="A93044">
    <property type="entry name" value="JQ0007"/>
</dbReference>
<dbReference type="RefSeq" id="NP_459394.1">
    <property type="nucleotide sequence ID" value="NC_003197.2"/>
</dbReference>
<dbReference type="RefSeq" id="WP_000149625.1">
    <property type="nucleotide sequence ID" value="NC_003197.2"/>
</dbReference>
<dbReference type="STRING" id="99287.STM0399"/>
<dbReference type="PaxDb" id="99287-STM0399"/>
<dbReference type="GeneID" id="1251918"/>
<dbReference type="KEGG" id="stm:STM0399"/>
<dbReference type="PATRIC" id="fig|99287.12.peg.426"/>
<dbReference type="HOGENOM" id="CLU_036807_0_0_6"/>
<dbReference type="OMA" id="IWPAGPI"/>
<dbReference type="PhylomeDB" id="P0A1W8"/>
<dbReference type="BioCyc" id="SENT99287:STM0399-MONOMER"/>
<dbReference type="Proteomes" id="UP000001014">
    <property type="component" value="Chromosome"/>
</dbReference>
<dbReference type="GO" id="GO:0005886">
    <property type="term" value="C:plasma membrane"/>
    <property type="evidence" value="ECO:0000318"/>
    <property type="project" value="GO_Central"/>
</dbReference>
<dbReference type="GO" id="GO:0015188">
    <property type="term" value="F:L-isoleucine transmembrane transporter activity"/>
    <property type="evidence" value="ECO:0000318"/>
    <property type="project" value="GO_Central"/>
</dbReference>
<dbReference type="GO" id="GO:0015190">
    <property type="term" value="F:L-leucine transmembrane transporter activity"/>
    <property type="evidence" value="ECO:0000318"/>
    <property type="project" value="GO_Central"/>
</dbReference>
<dbReference type="GO" id="GO:0005304">
    <property type="term" value="F:L-valine transmembrane transporter activity"/>
    <property type="evidence" value="ECO:0000318"/>
    <property type="project" value="GO_Central"/>
</dbReference>
<dbReference type="GO" id="GO:0015818">
    <property type="term" value="P:isoleucine transport"/>
    <property type="evidence" value="ECO:0000318"/>
    <property type="project" value="GO_Central"/>
</dbReference>
<dbReference type="GO" id="GO:0015820">
    <property type="term" value="P:L-leucine transport"/>
    <property type="evidence" value="ECO:0000318"/>
    <property type="project" value="GO_Central"/>
</dbReference>
<dbReference type="GO" id="GO:0015829">
    <property type="term" value="P:valine transport"/>
    <property type="evidence" value="ECO:0000318"/>
    <property type="project" value="GO_Central"/>
</dbReference>
<dbReference type="InterPro" id="IPR004685">
    <property type="entry name" value="Brnchd-chn_aa_trnsp_Livcs"/>
</dbReference>
<dbReference type="NCBIfam" id="TIGR00796">
    <property type="entry name" value="livcs"/>
    <property type="match status" value="1"/>
</dbReference>
<dbReference type="NCBIfam" id="NF011962">
    <property type="entry name" value="PRK15433.1"/>
    <property type="match status" value="1"/>
</dbReference>
<dbReference type="PANTHER" id="PTHR30588:SF0">
    <property type="entry name" value="BRANCHED-CHAIN AMINO ACID PERMEASE BRNQ"/>
    <property type="match status" value="1"/>
</dbReference>
<dbReference type="PANTHER" id="PTHR30588">
    <property type="entry name" value="BRANCHED-CHAIN AMINO ACID TRANSPORT SYSTEM 2 CARRIER PROTEIN"/>
    <property type="match status" value="1"/>
</dbReference>
<dbReference type="Pfam" id="PF05525">
    <property type="entry name" value="Branch_AA_trans"/>
    <property type="match status" value="1"/>
</dbReference>
<name>BRNQ_SALTY</name>
<feature type="chain" id="PRO_0000099768" description="Branched-chain amino acid permease BrnQ">
    <location>
        <begin position="1"/>
        <end position="439"/>
    </location>
</feature>
<feature type="topological domain" description="Cytoplasmic" evidence="2">
    <location>
        <begin position="1"/>
        <end position="9"/>
    </location>
</feature>
<feature type="transmembrane region" description="Helical" evidence="2">
    <location>
        <begin position="10"/>
        <end position="30"/>
    </location>
</feature>
<feature type="topological domain" description="Periplasmic" evidence="2">
    <location>
        <begin position="31"/>
        <end position="43"/>
    </location>
</feature>
<feature type="transmembrane region" description="Helical" evidence="2">
    <location>
        <begin position="44"/>
        <end position="64"/>
    </location>
</feature>
<feature type="topological domain" description="Cytoplasmic" evidence="2">
    <location>
        <begin position="65"/>
        <end position="79"/>
    </location>
</feature>
<feature type="transmembrane region" description="Helical" evidence="2">
    <location>
        <begin position="80"/>
        <end position="100"/>
    </location>
</feature>
<feature type="topological domain" description="Periplasmic" evidence="2">
    <location>
        <begin position="101"/>
        <end position="118"/>
    </location>
</feature>
<feature type="transmembrane region" description="Helical" evidence="2">
    <location>
        <begin position="119"/>
        <end position="139"/>
    </location>
</feature>
<feature type="topological domain" description="Cytoplasmic" evidence="2">
    <location>
        <begin position="140"/>
        <end position="149"/>
    </location>
</feature>
<feature type="transmembrane region" description="Helical" evidence="2">
    <location>
        <begin position="150"/>
        <end position="170"/>
    </location>
</feature>
<feature type="topological domain" description="Periplasmic" evidence="2">
    <location>
        <begin position="171"/>
        <end position="189"/>
    </location>
</feature>
<feature type="transmembrane region" description="Helical" evidence="2">
    <location>
        <begin position="190"/>
        <end position="210"/>
    </location>
</feature>
<feature type="topological domain" description="Cytoplasmic" evidence="2">
    <location>
        <begin position="211"/>
        <end position="226"/>
    </location>
</feature>
<feature type="transmembrane region" description="Helical" evidence="2">
    <location>
        <begin position="227"/>
        <end position="247"/>
    </location>
</feature>
<feature type="topological domain" description="Periplasmic" evidence="2">
    <location>
        <begin position="248"/>
        <end position="277"/>
    </location>
</feature>
<feature type="transmembrane region" description="Helical" evidence="2">
    <location>
        <begin position="278"/>
        <end position="298"/>
    </location>
</feature>
<feature type="topological domain" description="Cytoplasmic" evidence="2">
    <location>
        <begin position="299"/>
        <end position="316"/>
    </location>
</feature>
<feature type="transmembrane region" description="Helical" evidence="2">
    <location>
        <begin position="317"/>
        <end position="337"/>
    </location>
</feature>
<feature type="topological domain" description="Periplasmic" evidence="2">
    <location>
        <position position="338"/>
    </location>
</feature>
<feature type="transmembrane region" description="Helical" evidence="2">
    <location>
        <begin position="339"/>
        <end position="359"/>
    </location>
</feature>
<feature type="topological domain" description="Cytoplasmic" evidence="2">
    <location>
        <begin position="360"/>
        <end position="369"/>
    </location>
</feature>
<feature type="transmembrane region" description="Helical" evidence="2">
    <location>
        <begin position="370"/>
        <end position="390"/>
    </location>
</feature>
<feature type="topological domain" description="Periplasmic" evidence="2">
    <location>
        <begin position="391"/>
        <end position="404"/>
    </location>
</feature>
<feature type="transmembrane region" description="Helical" evidence="2">
    <location>
        <begin position="405"/>
        <end position="425"/>
    </location>
</feature>
<feature type="topological domain" description="Cytoplasmic" evidence="1">
    <location>
        <begin position="426"/>
        <end position="439"/>
    </location>
</feature>
<feature type="sequence conflict" description="In Ref. 1; BAA00239." evidence="5" ref="1">
    <original>G</original>
    <variation>A</variation>
    <location>
        <position position="14"/>
    </location>
</feature>
<feature type="sequence conflict" description="In Ref. 1; BAA00239." evidence="5" ref="1">
    <original>A</original>
    <variation>R</variation>
    <location>
        <position position="24"/>
    </location>
</feature>
<feature type="sequence conflict" description="In Ref. 1; BAA00239." evidence="5" ref="1">
    <original>A</original>
    <variation>R</variation>
    <location>
        <position position="45"/>
    </location>
</feature>
<feature type="sequence conflict" description="In Ref. 1; BAA00239." evidence="5" ref="1">
    <original>TLG</original>
    <variation>DWV</variation>
    <location>
        <begin position="199"/>
        <end position="201"/>
    </location>
</feature>
<accession>P0A1W8</accession>
<accession>P14931</accession>
<evidence type="ECO:0000250" key="1">
    <source>
        <dbReference type="UniProtKB" id="P0AD99"/>
    </source>
</evidence>
<evidence type="ECO:0000255" key="2"/>
<evidence type="ECO:0000269" key="3">
    <source>
    </source>
</evidence>
<evidence type="ECO:0000303" key="4">
    <source>
    </source>
</evidence>
<evidence type="ECO:0000305" key="5"/>
<reference key="1">
    <citation type="journal article" date="1988" name="Jpn. J. Genet.">
        <title>Cloning and nucleotide sequence of the brnQ gene, the structural gene for a membrane-associated component of the LIV-II transport system for branched-chain amino acids in Salmonella typhimurium.</title>
        <authorList>
            <person name="Ohnishi K."/>
            <person name="Hasegawa A."/>
            <person name="Matsubara K."/>
            <person name="Date T."/>
            <person name="Okada T."/>
            <person name="Kiritani K."/>
        </authorList>
    </citation>
    <scope>NUCLEOTIDE SEQUENCE [GENOMIC DNA]</scope>
    <scope>FUNCTION</scope>
</reference>
<reference key="2">
    <citation type="journal article" date="2001" name="Nature">
        <title>Complete genome sequence of Salmonella enterica serovar Typhimurium LT2.</title>
        <authorList>
            <person name="McClelland M."/>
            <person name="Sanderson K.E."/>
            <person name="Spieth J."/>
            <person name="Clifton S.W."/>
            <person name="Latreille P."/>
            <person name="Courtney L."/>
            <person name="Porwollik S."/>
            <person name="Ali J."/>
            <person name="Dante M."/>
            <person name="Du F."/>
            <person name="Hou S."/>
            <person name="Layman D."/>
            <person name="Leonard S."/>
            <person name="Nguyen C."/>
            <person name="Scott K."/>
            <person name="Holmes A."/>
            <person name="Grewal N."/>
            <person name="Mulvaney E."/>
            <person name="Ryan E."/>
            <person name="Sun H."/>
            <person name="Florea L."/>
            <person name="Miller W."/>
            <person name="Stoneking T."/>
            <person name="Nhan M."/>
            <person name="Waterston R."/>
            <person name="Wilson R.K."/>
        </authorList>
    </citation>
    <scope>NUCLEOTIDE SEQUENCE [LARGE SCALE GENOMIC DNA]</scope>
    <source>
        <strain>LT2 / SGSC1412 / ATCC 700720</strain>
    </source>
</reference>
<keyword id="KW-0029">Amino-acid transport</keyword>
<keyword id="KW-0997">Cell inner membrane</keyword>
<keyword id="KW-1003">Cell membrane</keyword>
<keyword id="KW-0472">Membrane</keyword>
<keyword id="KW-1185">Reference proteome</keyword>
<keyword id="KW-0812">Transmembrane</keyword>
<keyword id="KW-1133">Transmembrane helix</keyword>
<keyword id="KW-0813">Transport</keyword>
<organism>
    <name type="scientific">Salmonella typhimurium (strain LT2 / SGSC1412 / ATCC 700720)</name>
    <dbReference type="NCBI Taxonomy" id="99287"/>
    <lineage>
        <taxon>Bacteria</taxon>
        <taxon>Pseudomonadati</taxon>
        <taxon>Pseudomonadota</taxon>
        <taxon>Gammaproteobacteria</taxon>
        <taxon>Enterobacterales</taxon>
        <taxon>Enterobacteriaceae</taxon>
        <taxon>Salmonella</taxon>
    </lineage>
</organism>
<comment type="function">
    <text evidence="1 3">Liv-II branched chain amino acid transport system, which transports leucine, valine and isoleucine.</text>
</comment>
<comment type="subcellular location">
    <subcellularLocation>
        <location evidence="1">Cell inner membrane</location>
        <topology evidence="2">Multi-pass membrane protein</topology>
    </subcellularLocation>
</comment>
<comment type="similarity">
    <text evidence="5">Belongs to the branched chain amino acid transporter family.</text>
</comment>
<protein>
    <recommendedName>
        <fullName evidence="5">Branched-chain amino acid permease BrnQ</fullName>
        <shortName evidence="5">BCAA permease</shortName>
    </recommendedName>
    <alternativeName>
        <fullName>Branched-chain amino acid transport system 2 carrier protein</fullName>
    </alternativeName>
    <alternativeName>
        <fullName>LIV-II</fullName>
    </alternativeName>
</protein>
<sequence length="439" mass="46221">MTHQLKSRDIIALGFMTFALFVGAGNIIFPPMVGLQAGEHVWTAAIGFLITAVGLPVLTVVALAKVGGGVDSLSTPIGKVAGLLLATVCYLAVGPLFATPRTATVSFEVGIAPLTGDSAMPLLIYSVVYFAIVILVSLYPGKLLDTVGNFLAPLKIIALVILSVAAIVWPAGPISNALDAYQNAAFSNGFVNGYLTMDTLGAMVFGIVIVNAARSRGVTEARLLTRYTVWAGLMAGVGLTLLYLALFRLGSDSATLVDQSANGAAILHAYVQHTFGGAGSFLLAALIFIACLVTAVGLTCACAEFFAQYIPLSYRTLVFILGGFSMVVSNLGLSHLIQISIPVLTAIYPPCIALVVLSFTRSWWHNSTRIIAPAMFISLLFGILDGIKASAFGDMLPAWSQRLPLAEQGLAWLMPTVVMVILAIIWDRAAGRQVTSSAH</sequence>
<proteinExistence type="inferred from homology"/>
<gene>
    <name evidence="4" type="primary">brnQ</name>
    <name type="ordered locus">STM0399</name>
</gene>